<sequence>MSNWRHKLWRKLSSFQRASYSTTSSRNNKLKLDDLRKLRPMILKRIENRAKDYPVKEIVPVAEEILIARKNLISNIAALLKVFPVLTCKFCSEVFVGKEGHLIETCRSYIRRGNNRLHEWVPGSINDILVPVESYHLHNISQGVIRHQERFDYDRVPAILELCCQAGAIHPEEILQYSEIHDNPQISEEDIRSLPAGDLKYVGANALMAWEKVRAGVKKLLLVYPSKVCKRCKEVHVGPSGHKARLCGVFKYESWRGTHYWEKAGVNDLVPEKMVWHRRPQDPVVLVDEGRSYYGHAPAIVSLCSHTGAIVPVKYACKMKPQGLSFSFTNPVPNLET</sequence>
<comment type="function">
    <text evidence="3">May be involved in the stable assembly of several 4Fe-4S cluster-containing complexes of mitochondria.</text>
</comment>
<comment type="subcellular location">
    <subcellularLocation>
        <location evidence="3">Mitochondrion</location>
    </subcellularLocation>
</comment>
<comment type="domain">
    <text evidence="3">The APO motifs may provide ligands for 4Fe-4S centers.</text>
</comment>
<comment type="similarity">
    <text evidence="2">Belongs to the APO family.</text>
</comment>
<comment type="sequence caution" evidence="3">
    <conflict type="erroneous gene model prediction">
        <sequence resource="EMBL-CDS" id="BAB02836"/>
    </conflict>
</comment>
<proteinExistence type="evidence at transcript level"/>
<protein>
    <recommendedName>
        <fullName>APO protein 4, mitochondrial</fullName>
    </recommendedName>
</protein>
<accession>Q9LSZ0</accession>
<accession>Q8GYN3</accession>
<keyword id="KW-0496">Mitochondrion</keyword>
<keyword id="KW-1185">Reference proteome</keyword>
<keyword id="KW-0677">Repeat</keyword>
<keyword id="KW-0809">Transit peptide</keyword>
<reference key="1">
    <citation type="journal article" date="2000" name="DNA Res.">
        <title>Structural analysis of Arabidopsis thaliana chromosome 3. I. Sequence features of the regions of 4,504,864 bp covered by sixty P1 and TAC clones.</title>
        <authorList>
            <person name="Sato S."/>
            <person name="Nakamura Y."/>
            <person name="Kaneko T."/>
            <person name="Katoh T."/>
            <person name="Asamizu E."/>
            <person name="Tabata S."/>
        </authorList>
    </citation>
    <scope>NUCLEOTIDE SEQUENCE [LARGE SCALE GENOMIC DNA]</scope>
    <source>
        <strain>cv. Columbia</strain>
    </source>
</reference>
<reference key="2">
    <citation type="journal article" date="2017" name="Plant J.">
        <title>Araport11: a complete reannotation of the Arabidopsis thaliana reference genome.</title>
        <authorList>
            <person name="Cheng C.Y."/>
            <person name="Krishnakumar V."/>
            <person name="Chan A.P."/>
            <person name="Thibaud-Nissen F."/>
            <person name="Schobel S."/>
            <person name="Town C.D."/>
        </authorList>
    </citation>
    <scope>GENOME REANNOTATION</scope>
    <source>
        <strain>cv. Columbia</strain>
    </source>
</reference>
<reference key="3">
    <citation type="journal article" date="2002" name="Science">
        <title>Functional annotation of a full-length Arabidopsis cDNA collection.</title>
        <authorList>
            <person name="Seki M."/>
            <person name="Narusaka M."/>
            <person name="Kamiya A."/>
            <person name="Ishida J."/>
            <person name="Satou M."/>
            <person name="Sakurai T."/>
            <person name="Nakajima M."/>
            <person name="Enju A."/>
            <person name="Akiyama K."/>
            <person name="Oono Y."/>
            <person name="Muramatsu M."/>
            <person name="Hayashizaki Y."/>
            <person name="Kawai J."/>
            <person name="Carninci P."/>
            <person name="Itoh M."/>
            <person name="Ishii Y."/>
            <person name="Arakawa T."/>
            <person name="Shibata K."/>
            <person name="Shinagawa A."/>
            <person name="Shinozaki K."/>
        </authorList>
    </citation>
    <scope>NUCLEOTIDE SEQUENCE [LARGE SCALE MRNA]</scope>
    <source>
        <strain>cv. Columbia</strain>
    </source>
</reference>
<name>APO4_ARATH</name>
<organism>
    <name type="scientific">Arabidopsis thaliana</name>
    <name type="common">Mouse-ear cress</name>
    <dbReference type="NCBI Taxonomy" id="3702"/>
    <lineage>
        <taxon>Eukaryota</taxon>
        <taxon>Viridiplantae</taxon>
        <taxon>Streptophyta</taxon>
        <taxon>Embryophyta</taxon>
        <taxon>Tracheophyta</taxon>
        <taxon>Spermatophyta</taxon>
        <taxon>Magnoliopsida</taxon>
        <taxon>eudicotyledons</taxon>
        <taxon>Gunneridae</taxon>
        <taxon>Pentapetalae</taxon>
        <taxon>rosids</taxon>
        <taxon>malvids</taxon>
        <taxon>Brassicales</taxon>
        <taxon>Brassicaceae</taxon>
        <taxon>Camelineae</taxon>
        <taxon>Arabidopsis</taxon>
    </lineage>
</organism>
<evidence type="ECO:0000255" key="1"/>
<evidence type="ECO:0000255" key="2">
    <source>
        <dbReference type="PROSITE-ProRule" id="PRU00832"/>
    </source>
</evidence>
<evidence type="ECO:0000305" key="3"/>
<feature type="transit peptide" description="Mitochondrion" evidence="1">
    <location>
        <begin position="1"/>
        <end position="20"/>
    </location>
</feature>
<feature type="chain" id="PRO_0000001933" description="APO protein 4, mitochondrial">
    <location>
        <begin position="21"/>
        <end position="337"/>
    </location>
</feature>
<feature type="domain" description="APO 1" evidence="2">
    <location>
        <begin position="87"/>
        <end position="172"/>
    </location>
</feature>
<feature type="domain" description="APO 2" evidence="2">
    <location>
        <begin position="228"/>
        <end position="313"/>
    </location>
</feature>
<gene>
    <name type="primary">APO4</name>
    <name type="ordered locus">At3g21740</name>
    <name type="ORF">MSD21.5</name>
</gene>
<dbReference type="EMBL" id="AB025634">
    <property type="protein sequence ID" value="BAB02836.1"/>
    <property type="status" value="ALT_SEQ"/>
    <property type="molecule type" value="Genomic_DNA"/>
</dbReference>
<dbReference type="EMBL" id="CP002686">
    <property type="protein sequence ID" value="AEE76547.1"/>
    <property type="molecule type" value="Genomic_DNA"/>
</dbReference>
<dbReference type="EMBL" id="AK117492">
    <property type="protein sequence ID" value="BAC42155.1"/>
    <property type="molecule type" value="mRNA"/>
</dbReference>
<dbReference type="RefSeq" id="NP_188811.2">
    <property type="nucleotide sequence ID" value="NM_113069.3"/>
</dbReference>
<dbReference type="FunCoup" id="Q9LSZ0">
    <property type="interactions" value="1677"/>
</dbReference>
<dbReference type="STRING" id="3702.Q9LSZ0"/>
<dbReference type="PaxDb" id="3702-AT3G21740.1"/>
<dbReference type="ProteomicsDB" id="244474"/>
<dbReference type="EnsemblPlants" id="AT3G21740.1">
    <property type="protein sequence ID" value="AT3G21740.1"/>
    <property type="gene ID" value="AT3G21740"/>
</dbReference>
<dbReference type="GeneID" id="821728"/>
<dbReference type="Gramene" id="AT3G21740.1">
    <property type="protein sequence ID" value="AT3G21740.1"/>
    <property type="gene ID" value="AT3G21740"/>
</dbReference>
<dbReference type="KEGG" id="ath:AT3G21740"/>
<dbReference type="Araport" id="AT3G21740"/>
<dbReference type="TAIR" id="AT3G21740">
    <property type="gene designation" value="APO4"/>
</dbReference>
<dbReference type="eggNOG" id="ENOG502QS7W">
    <property type="taxonomic scope" value="Eukaryota"/>
</dbReference>
<dbReference type="HOGENOM" id="CLU_033199_1_0_1"/>
<dbReference type="InParanoid" id="Q9LSZ0"/>
<dbReference type="OMA" id="GYKHRAK"/>
<dbReference type="PhylomeDB" id="Q9LSZ0"/>
<dbReference type="PRO" id="PR:Q9LSZ0"/>
<dbReference type="Proteomes" id="UP000006548">
    <property type="component" value="Chromosome 3"/>
</dbReference>
<dbReference type="ExpressionAtlas" id="Q9LSZ0">
    <property type="expression patterns" value="baseline and differential"/>
</dbReference>
<dbReference type="GO" id="GO:0005739">
    <property type="term" value="C:mitochondrion"/>
    <property type="evidence" value="ECO:0007669"/>
    <property type="project" value="UniProtKB-SubCell"/>
</dbReference>
<dbReference type="GO" id="GO:0003723">
    <property type="term" value="F:RNA binding"/>
    <property type="evidence" value="ECO:0007669"/>
    <property type="project" value="InterPro"/>
</dbReference>
<dbReference type="InterPro" id="IPR023342">
    <property type="entry name" value="APO_dom"/>
</dbReference>
<dbReference type="Pfam" id="PF05634">
    <property type="entry name" value="APO_RNA-bind"/>
    <property type="match status" value="2"/>
</dbReference>
<dbReference type="PROSITE" id="PS51499">
    <property type="entry name" value="APO"/>
    <property type="match status" value="2"/>
</dbReference>